<name>ANX10_DROME</name>
<evidence type="ECO:0000250" key="1"/>
<evidence type="ECO:0000255" key="2">
    <source>
        <dbReference type="PROSITE-ProRule" id="PRU01245"/>
    </source>
</evidence>
<evidence type="ECO:0000303" key="3">
    <source>
    </source>
</evidence>
<evidence type="ECO:0000305" key="4"/>
<reference key="1">
    <citation type="journal article" date="1990" name="J. Biol. Chem.">
        <title>Two novel annexins from Drosophila melanogaster. Cloning, characterization, and differential expression in development.</title>
        <authorList>
            <person name="Johnston P.A."/>
            <person name="Perin M.S."/>
            <person name="Reynolds G.A."/>
            <person name="Wasserman S.A."/>
            <person name="Suedhof T.C."/>
        </authorList>
    </citation>
    <scope>NUCLEOTIDE SEQUENCE [MRNA] (ISOFORM B)</scope>
</reference>
<reference key="2">
    <citation type="journal article" date="1995" name="DNA Cell Biol.">
        <title>Structure of the Drosophila melanogaster annexin X gene.</title>
        <authorList>
            <person name="Benevolenskaya E.V."/>
            <person name="Nurminsky D.I."/>
            <person name="Gvozdev V.A."/>
        </authorList>
    </citation>
    <scope>NUCLEOTIDE SEQUENCE [GENOMIC DNA]</scope>
</reference>
<reference key="3">
    <citation type="journal article" date="2000" name="Science">
        <title>The genome sequence of Drosophila melanogaster.</title>
        <authorList>
            <person name="Adams M.D."/>
            <person name="Celniker S.E."/>
            <person name="Holt R.A."/>
            <person name="Evans C.A."/>
            <person name="Gocayne J.D."/>
            <person name="Amanatides P.G."/>
            <person name="Scherer S.E."/>
            <person name="Li P.W."/>
            <person name="Hoskins R.A."/>
            <person name="Galle R.F."/>
            <person name="George R.A."/>
            <person name="Lewis S.E."/>
            <person name="Richards S."/>
            <person name="Ashburner M."/>
            <person name="Henderson S.N."/>
            <person name="Sutton G.G."/>
            <person name="Wortman J.R."/>
            <person name="Yandell M.D."/>
            <person name="Zhang Q."/>
            <person name="Chen L.X."/>
            <person name="Brandon R.C."/>
            <person name="Rogers Y.-H.C."/>
            <person name="Blazej R.G."/>
            <person name="Champe M."/>
            <person name="Pfeiffer B.D."/>
            <person name="Wan K.H."/>
            <person name="Doyle C."/>
            <person name="Baxter E.G."/>
            <person name="Helt G."/>
            <person name="Nelson C.R."/>
            <person name="Miklos G.L.G."/>
            <person name="Abril J.F."/>
            <person name="Agbayani A."/>
            <person name="An H.-J."/>
            <person name="Andrews-Pfannkoch C."/>
            <person name="Baldwin D."/>
            <person name="Ballew R.M."/>
            <person name="Basu A."/>
            <person name="Baxendale J."/>
            <person name="Bayraktaroglu L."/>
            <person name="Beasley E.M."/>
            <person name="Beeson K.Y."/>
            <person name="Benos P.V."/>
            <person name="Berman B.P."/>
            <person name="Bhandari D."/>
            <person name="Bolshakov S."/>
            <person name="Borkova D."/>
            <person name="Botchan M.R."/>
            <person name="Bouck J."/>
            <person name="Brokstein P."/>
            <person name="Brottier P."/>
            <person name="Burtis K.C."/>
            <person name="Busam D.A."/>
            <person name="Butler H."/>
            <person name="Cadieu E."/>
            <person name="Center A."/>
            <person name="Chandra I."/>
            <person name="Cherry J.M."/>
            <person name="Cawley S."/>
            <person name="Dahlke C."/>
            <person name="Davenport L.B."/>
            <person name="Davies P."/>
            <person name="de Pablos B."/>
            <person name="Delcher A."/>
            <person name="Deng Z."/>
            <person name="Mays A.D."/>
            <person name="Dew I."/>
            <person name="Dietz S.M."/>
            <person name="Dodson K."/>
            <person name="Doup L.E."/>
            <person name="Downes M."/>
            <person name="Dugan-Rocha S."/>
            <person name="Dunkov B.C."/>
            <person name="Dunn P."/>
            <person name="Durbin K.J."/>
            <person name="Evangelista C.C."/>
            <person name="Ferraz C."/>
            <person name="Ferriera S."/>
            <person name="Fleischmann W."/>
            <person name="Fosler C."/>
            <person name="Gabrielian A.E."/>
            <person name="Garg N.S."/>
            <person name="Gelbart W.M."/>
            <person name="Glasser K."/>
            <person name="Glodek A."/>
            <person name="Gong F."/>
            <person name="Gorrell J.H."/>
            <person name="Gu Z."/>
            <person name="Guan P."/>
            <person name="Harris M."/>
            <person name="Harris N.L."/>
            <person name="Harvey D.A."/>
            <person name="Heiman T.J."/>
            <person name="Hernandez J.R."/>
            <person name="Houck J."/>
            <person name="Hostin D."/>
            <person name="Houston K.A."/>
            <person name="Howland T.J."/>
            <person name="Wei M.-H."/>
            <person name="Ibegwam C."/>
            <person name="Jalali M."/>
            <person name="Kalush F."/>
            <person name="Karpen G.H."/>
            <person name="Ke Z."/>
            <person name="Kennison J.A."/>
            <person name="Ketchum K.A."/>
            <person name="Kimmel B.E."/>
            <person name="Kodira C.D."/>
            <person name="Kraft C.L."/>
            <person name="Kravitz S."/>
            <person name="Kulp D."/>
            <person name="Lai Z."/>
            <person name="Lasko P."/>
            <person name="Lei Y."/>
            <person name="Levitsky A.A."/>
            <person name="Li J.H."/>
            <person name="Li Z."/>
            <person name="Liang Y."/>
            <person name="Lin X."/>
            <person name="Liu X."/>
            <person name="Mattei B."/>
            <person name="McIntosh T.C."/>
            <person name="McLeod M.P."/>
            <person name="McPherson D."/>
            <person name="Merkulov G."/>
            <person name="Milshina N.V."/>
            <person name="Mobarry C."/>
            <person name="Morris J."/>
            <person name="Moshrefi A."/>
            <person name="Mount S.M."/>
            <person name="Moy M."/>
            <person name="Murphy B."/>
            <person name="Murphy L."/>
            <person name="Muzny D.M."/>
            <person name="Nelson D.L."/>
            <person name="Nelson D.R."/>
            <person name="Nelson K.A."/>
            <person name="Nixon K."/>
            <person name="Nusskern D.R."/>
            <person name="Pacleb J.M."/>
            <person name="Palazzolo M."/>
            <person name="Pittman G.S."/>
            <person name="Pan S."/>
            <person name="Pollard J."/>
            <person name="Puri V."/>
            <person name="Reese M.G."/>
            <person name="Reinert K."/>
            <person name="Remington K."/>
            <person name="Saunders R.D.C."/>
            <person name="Scheeler F."/>
            <person name="Shen H."/>
            <person name="Shue B.C."/>
            <person name="Siden-Kiamos I."/>
            <person name="Simpson M."/>
            <person name="Skupski M.P."/>
            <person name="Smith T.J."/>
            <person name="Spier E."/>
            <person name="Spradling A.C."/>
            <person name="Stapleton M."/>
            <person name="Strong R."/>
            <person name="Sun E."/>
            <person name="Svirskas R."/>
            <person name="Tector C."/>
            <person name="Turner R."/>
            <person name="Venter E."/>
            <person name="Wang A.H."/>
            <person name="Wang X."/>
            <person name="Wang Z.-Y."/>
            <person name="Wassarman D.A."/>
            <person name="Weinstock G.M."/>
            <person name="Weissenbach J."/>
            <person name="Williams S.M."/>
            <person name="Woodage T."/>
            <person name="Worley K.C."/>
            <person name="Wu D."/>
            <person name="Yang S."/>
            <person name="Yao Q.A."/>
            <person name="Ye J."/>
            <person name="Yeh R.-F."/>
            <person name="Zaveri J.S."/>
            <person name="Zhan M."/>
            <person name="Zhang G."/>
            <person name="Zhao Q."/>
            <person name="Zheng L."/>
            <person name="Zheng X.H."/>
            <person name="Zhong F.N."/>
            <person name="Zhong W."/>
            <person name="Zhou X."/>
            <person name="Zhu S.C."/>
            <person name="Zhu X."/>
            <person name="Smith H.O."/>
            <person name="Gibbs R.A."/>
            <person name="Myers E.W."/>
            <person name="Rubin G.M."/>
            <person name="Venter J.C."/>
        </authorList>
    </citation>
    <scope>NUCLEOTIDE SEQUENCE [LARGE SCALE GENOMIC DNA]</scope>
    <source>
        <strain>Berkeley</strain>
    </source>
</reference>
<reference key="4">
    <citation type="journal article" date="2002" name="Genome Biol.">
        <title>Annotation of the Drosophila melanogaster euchromatic genome: a systematic review.</title>
        <authorList>
            <person name="Misra S."/>
            <person name="Crosby M.A."/>
            <person name="Mungall C.J."/>
            <person name="Matthews B.B."/>
            <person name="Campbell K.S."/>
            <person name="Hradecky P."/>
            <person name="Huang Y."/>
            <person name="Kaminker J.S."/>
            <person name="Millburn G.H."/>
            <person name="Prochnik S.E."/>
            <person name="Smith C.D."/>
            <person name="Tupy J.L."/>
            <person name="Whitfield E.J."/>
            <person name="Bayraktaroglu L."/>
            <person name="Berman B.P."/>
            <person name="Bettencourt B.R."/>
            <person name="Celniker S.E."/>
            <person name="de Grey A.D.N.J."/>
            <person name="Drysdale R.A."/>
            <person name="Harris N.L."/>
            <person name="Richter J."/>
            <person name="Russo S."/>
            <person name="Schroeder A.J."/>
            <person name="Shu S.Q."/>
            <person name="Stapleton M."/>
            <person name="Yamada C."/>
            <person name="Ashburner M."/>
            <person name="Gelbart W.M."/>
            <person name="Rubin G.M."/>
            <person name="Lewis S.E."/>
        </authorList>
    </citation>
    <scope>GENOME REANNOTATION</scope>
    <source>
        <strain>Berkeley</strain>
    </source>
</reference>
<reference key="5">
    <citation type="journal article" date="2002" name="Genome Biol.">
        <title>A Drosophila full-length cDNA resource.</title>
        <authorList>
            <person name="Stapleton M."/>
            <person name="Carlson J.W."/>
            <person name="Brokstein P."/>
            <person name="Yu C."/>
            <person name="Champe M."/>
            <person name="George R.A."/>
            <person name="Guarin H."/>
            <person name="Kronmiller B."/>
            <person name="Pacleb J.M."/>
            <person name="Park S."/>
            <person name="Wan K.H."/>
            <person name="Rubin G.M."/>
            <person name="Celniker S.E."/>
        </authorList>
    </citation>
    <scope>NUCLEOTIDE SEQUENCE [LARGE SCALE MRNA] (ISOFORM A)</scope>
    <source>
        <strain>Berkeley</strain>
        <tissue>Embryo</tissue>
    </source>
</reference>
<reference key="6">
    <citation type="submission" date="2011-02" db="EMBL/GenBank/DDBJ databases">
        <authorList>
            <person name="Carlson J."/>
            <person name="Booth B."/>
            <person name="Frise E."/>
            <person name="Park S."/>
            <person name="Wan K."/>
            <person name="Yu C."/>
            <person name="Celniker S."/>
        </authorList>
    </citation>
    <scope>NUCLEOTIDE SEQUENCE [LARGE SCALE MRNA] (ISOFORM B)</scope>
    <source>
        <strain>Berkeley</strain>
    </source>
</reference>
<reference key="7">
    <citation type="submission" date="1995-05" db="EMBL/GenBank/DDBJ databases">
        <title>Cluster of tandem repeats in Drosophila genome comprising putative genes encoding cytoplasmic dynein intermediate chain and 3'-part of annexin X.</title>
        <authorList>
            <person name="Benevolenskaya E.V."/>
            <person name="Gvozdev V.A."/>
        </authorList>
    </citation>
    <scope>NUCLEOTIDE SEQUENCE [GENOMIC DNA] OF 199-320</scope>
    <source>
        <strain>GT WA</strain>
    </source>
</reference>
<dbReference type="EMBL" id="M34069">
    <property type="protein sequence ID" value="AAA28371.1"/>
    <property type="molecule type" value="mRNA"/>
</dbReference>
<dbReference type="EMBL" id="X78323">
    <property type="protein sequence ID" value="CAA55126.1"/>
    <property type="molecule type" value="Genomic_DNA"/>
</dbReference>
<dbReference type="EMBL" id="AE014298">
    <property type="protein sequence ID" value="AAF45380.1"/>
    <property type="molecule type" value="Genomic_DNA"/>
</dbReference>
<dbReference type="EMBL" id="AE014298">
    <property type="protein sequence ID" value="ACZ95337.1"/>
    <property type="molecule type" value="Genomic_DNA"/>
</dbReference>
<dbReference type="EMBL" id="AY061328">
    <property type="protein sequence ID" value="AAL28876.1"/>
    <property type="molecule type" value="mRNA"/>
</dbReference>
<dbReference type="EMBL" id="BT125926">
    <property type="protein sequence ID" value="ADX35905.1"/>
    <property type="molecule type" value="mRNA"/>
</dbReference>
<dbReference type="EMBL" id="L41945">
    <property type="protein sequence ID" value="AAB51186.1"/>
    <property type="molecule type" value="Genomic_DNA"/>
</dbReference>
<dbReference type="PIR" id="B42234">
    <property type="entry name" value="LUFF10"/>
</dbReference>
<dbReference type="RefSeq" id="NP_001162804.1">
    <molecule id="P22465-1"/>
    <property type="nucleotide sequence ID" value="NM_001169333.2"/>
</dbReference>
<dbReference type="RefSeq" id="NP_476615.1">
    <molecule id="P22465-2"/>
    <property type="nucleotide sequence ID" value="NM_057267.4"/>
</dbReference>
<dbReference type="SMR" id="P22465"/>
<dbReference type="BioGRID" id="59312">
    <property type="interactions" value="109"/>
</dbReference>
<dbReference type="FunCoup" id="P22465">
    <property type="interactions" value="74"/>
</dbReference>
<dbReference type="IntAct" id="P22465">
    <property type="interactions" value="192"/>
</dbReference>
<dbReference type="STRING" id="7227.FBpp0291143"/>
<dbReference type="TCDB" id="1.A.31.1.1">
    <property type="family name" value="the annexin (annexin) family"/>
</dbReference>
<dbReference type="GlyGen" id="P22465">
    <property type="glycosylation" value="1 site, 1 O-linked glycan (1 site)"/>
</dbReference>
<dbReference type="PaxDb" id="7227-FBpp0291143"/>
<dbReference type="DNASU" id="33019"/>
<dbReference type="EnsemblMetazoa" id="FBtr0070025">
    <molecule id="P22465-2"/>
    <property type="protein sequence ID" value="FBpp0070024"/>
    <property type="gene ID" value="FBgn0000084"/>
</dbReference>
<dbReference type="EnsemblMetazoa" id="FBtr0301931">
    <molecule id="P22465-1"/>
    <property type="protein sequence ID" value="FBpp0291143"/>
    <property type="gene ID" value="FBgn0000084"/>
</dbReference>
<dbReference type="GeneID" id="33019"/>
<dbReference type="KEGG" id="dme:Dmel_CG9579"/>
<dbReference type="AGR" id="FB:FBgn0000084"/>
<dbReference type="CTD" id="33019"/>
<dbReference type="FlyBase" id="FBgn0000084">
    <property type="gene designation" value="AnxB10"/>
</dbReference>
<dbReference type="VEuPathDB" id="VectorBase:FBgn0000084"/>
<dbReference type="eggNOG" id="KOG0819">
    <property type="taxonomic scope" value="Eukaryota"/>
</dbReference>
<dbReference type="GeneTree" id="ENSGT00940000165077"/>
<dbReference type="InParanoid" id="P22465"/>
<dbReference type="OMA" id="CMEGMGT"/>
<dbReference type="OrthoDB" id="37886at2759"/>
<dbReference type="PhylomeDB" id="P22465"/>
<dbReference type="Reactome" id="R-DME-114608">
    <property type="pathway name" value="Platelet degranulation"/>
</dbReference>
<dbReference type="Reactome" id="R-DME-6798695">
    <property type="pathway name" value="Neutrophil degranulation"/>
</dbReference>
<dbReference type="Reactome" id="R-DME-9860927">
    <property type="pathway name" value="Turbulent (oscillatory, disturbed) flow shear stress activates signaling by PIEZO1 and integrins in endothelial cells"/>
</dbReference>
<dbReference type="SignaLink" id="P22465"/>
<dbReference type="BioGRID-ORCS" id="33019">
    <property type="hits" value="0 hits in 3 CRISPR screens"/>
</dbReference>
<dbReference type="ChiTaRS" id="AnxB10">
    <property type="organism name" value="fly"/>
</dbReference>
<dbReference type="GenomeRNAi" id="33019"/>
<dbReference type="PRO" id="PR:P22465"/>
<dbReference type="Proteomes" id="UP000000803">
    <property type="component" value="Chromosome X"/>
</dbReference>
<dbReference type="Bgee" id="FBgn0000084">
    <property type="expression patterns" value="Expressed in seminal fluid secreting gland and 170 other cell types or tissues"/>
</dbReference>
<dbReference type="ExpressionAtlas" id="P22465">
    <property type="expression patterns" value="baseline and differential"/>
</dbReference>
<dbReference type="GO" id="GO:0005737">
    <property type="term" value="C:cytoplasm"/>
    <property type="evidence" value="ECO:0000318"/>
    <property type="project" value="GO_Central"/>
</dbReference>
<dbReference type="GO" id="GO:0016020">
    <property type="term" value="C:membrane"/>
    <property type="evidence" value="ECO:0000305"/>
    <property type="project" value="FlyBase"/>
</dbReference>
<dbReference type="GO" id="GO:0005634">
    <property type="term" value="C:nucleus"/>
    <property type="evidence" value="ECO:0000318"/>
    <property type="project" value="GO_Central"/>
</dbReference>
<dbReference type="GO" id="GO:0005886">
    <property type="term" value="C:plasma membrane"/>
    <property type="evidence" value="ECO:0000318"/>
    <property type="project" value="GO_Central"/>
</dbReference>
<dbReference type="GO" id="GO:0012506">
    <property type="term" value="C:vesicle membrane"/>
    <property type="evidence" value="ECO:0000318"/>
    <property type="project" value="GO_Central"/>
</dbReference>
<dbReference type="GO" id="GO:0005509">
    <property type="term" value="F:calcium ion binding"/>
    <property type="evidence" value="ECO:0007669"/>
    <property type="project" value="InterPro"/>
</dbReference>
<dbReference type="GO" id="GO:0005544">
    <property type="term" value="F:calcium-dependent phospholipid binding"/>
    <property type="evidence" value="ECO:0000314"/>
    <property type="project" value="FlyBase"/>
</dbReference>
<dbReference type="GO" id="GO:0001786">
    <property type="term" value="F:phosphatidylserine binding"/>
    <property type="evidence" value="ECO:0000318"/>
    <property type="project" value="GO_Central"/>
</dbReference>
<dbReference type="FunFam" id="1.10.220.10:FF:000001">
    <property type="entry name" value="Annexin"/>
    <property type="match status" value="1"/>
</dbReference>
<dbReference type="FunFam" id="1.10.220.10:FF:000002">
    <property type="entry name" value="Annexin"/>
    <property type="match status" value="1"/>
</dbReference>
<dbReference type="FunFam" id="1.10.220.10:FF:000004">
    <property type="entry name" value="Annexin"/>
    <property type="match status" value="1"/>
</dbReference>
<dbReference type="FunFam" id="1.10.220.10:FF:000010">
    <property type="entry name" value="Annexin"/>
    <property type="match status" value="1"/>
</dbReference>
<dbReference type="Gene3D" id="1.10.220.10">
    <property type="entry name" value="Annexin"/>
    <property type="match status" value="4"/>
</dbReference>
<dbReference type="InterPro" id="IPR001464">
    <property type="entry name" value="Annexin"/>
</dbReference>
<dbReference type="InterPro" id="IPR018502">
    <property type="entry name" value="Annexin_repeat"/>
</dbReference>
<dbReference type="InterPro" id="IPR018252">
    <property type="entry name" value="Annexin_repeat_CS"/>
</dbReference>
<dbReference type="InterPro" id="IPR037104">
    <property type="entry name" value="Annexin_sf"/>
</dbReference>
<dbReference type="PANTHER" id="PTHR10502">
    <property type="entry name" value="ANNEXIN"/>
    <property type="match status" value="1"/>
</dbReference>
<dbReference type="PANTHER" id="PTHR10502:SF177">
    <property type="entry name" value="ANNEXIN B10"/>
    <property type="match status" value="1"/>
</dbReference>
<dbReference type="Pfam" id="PF00191">
    <property type="entry name" value="Annexin"/>
    <property type="match status" value="4"/>
</dbReference>
<dbReference type="PRINTS" id="PR00196">
    <property type="entry name" value="ANNEXIN"/>
</dbReference>
<dbReference type="SMART" id="SM00335">
    <property type="entry name" value="ANX"/>
    <property type="match status" value="4"/>
</dbReference>
<dbReference type="SUPFAM" id="SSF47874">
    <property type="entry name" value="Annexin"/>
    <property type="match status" value="1"/>
</dbReference>
<dbReference type="PROSITE" id="PS00223">
    <property type="entry name" value="ANNEXIN_1"/>
    <property type="match status" value="1"/>
</dbReference>
<dbReference type="PROSITE" id="PS51897">
    <property type="entry name" value="ANNEXIN_2"/>
    <property type="match status" value="4"/>
</dbReference>
<accession>P22465</accession>
<accession>E1JJR8</accession>
<accession>E8NH50</accession>
<accession>Q27586</accession>
<accession>Q9W5W5</accession>
<keyword id="KW-0025">Alternative splicing</keyword>
<keyword id="KW-0041">Annexin</keyword>
<keyword id="KW-0106">Calcium</keyword>
<keyword id="KW-0111">Calcium/phospholipid-binding</keyword>
<keyword id="KW-1185">Reference proteome</keyword>
<keyword id="KW-0677">Repeat</keyword>
<protein>
    <recommendedName>
        <fullName>Annexin B10</fullName>
    </recommendedName>
    <alternativeName>
        <fullName>Annexin X</fullName>
    </alternativeName>
    <alternativeName>
        <fullName>Annexin-10</fullName>
    </alternativeName>
</protein>
<comment type="alternative products">
    <event type="alternative splicing"/>
    <isoform>
        <id>P22465-1</id>
        <name>B</name>
        <sequence type="displayed"/>
    </isoform>
    <isoform>
        <id>P22465-2</id>
        <name>A</name>
        <sequence type="described" ref="VSP_053652"/>
    </isoform>
</comment>
<comment type="domain">
    <text evidence="1">A pair of annexin repeats may form one binding site for calcium and phospholipid.</text>
</comment>
<comment type="similarity">
    <text evidence="2 4">Belongs to the annexin family.</text>
</comment>
<proteinExistence type="evidence at transcript level"/>
<gene>
    <name type="primary">AnxB10</name>
    <name type="synonym">AnnX</name>
    <name type="ORF">CG9579</name>
</gene>
<organism>
    <name type="scientific">Drosophila melanogaster</name>
    <name type="common">Fruit fly</name>
    <dbReference type="NCBI Taxonomy" id="7227"/>
    <lineage>
        <taxon>Eukaryota</taxon>
        <taxon>Metazoa</taxon>
        <taxon>Ecdysozoa</taxon>
        <taxon>Arthropoda</taxon>
        <taxon>Hexapoda</taxon>
        <taxon>Insecta</taxon>
        <taxon>Pterygota</taxon>
        <taxon>Neoptera</taxon>
        <taxon>Endopterygota</taxon>
        <taxon>Diptera</taxon>
        <taxon>Brachycera</taxon>
        <taxon>Muscomorpha</taxon>
        <taxon>Ephydroidea</taxon>
        <taxon>Drosophilidae</taxon>
        <taxon>Drosophila</taxon>
        <taxon>Sophophora</taxon>
    </lineage>
</organism>
<feature type="chain" id="PRO_0000067517" description="Annexin B10">
    <location>
        <begin position="1"/>
        <end position="321"/>
    </location>
</feature>
<feature type="repeat" description="Annexin 1" evidence="2">
    <location>
        <begin position="15"/>
        <end position="86"/>
    </location>
</feature>
<feature type="repeat" description="Annexin 2" evidence="2">
    <location>
        <begin position="87"/>
        <end position="158"/>
    </location>
</feature>
<feature type="repeat" description="Annexin 3" evidence="2">
    <location>
        <begin position="171"/>
        <end position="243"/>
    </location>
</feature>
<feature type="repeat" description="Annexin 4" evidence="2">
    <location>
        <begin position="247"/>
        <end position="319"/>
    </location>
</feature>
<feature type="splice variant" id="VSP_053652" description="In isoform A." evidence="3">
    <location>
        <position position="303"/>
    </location>
</feature>
<feature type="sequence conflict" description="In Ref. 7; AAB51186." evidence="4" ref="7">
    <original>V</original>
    <variation>E</variation>
    <location>
        <position position="216"/>
    </location>
</feature>
<feature type="sequence conflict" description="In Ref. 6; ADX35905." evidence="4" ref="6">
    <original>Q</original>
    <variation>H</variation>
    <location>
        <position position="220"/>
    </location>
</feature>
<feature type="sequence conflict" description="In Ref. 7; AAB51186." evidence="4" ref="7">
    <original>H</original>
    <variation>HD</variation>
    <location>
        <position position="235"/>
    </location>
</feature>
<feature type="sequence conflict" description="In Ref. 7; AAB51186." evidence="4" ref="7">
    <original>R</original>
    <variation>Q</variation>
    <location>
        <position position="291"/>
    </location>
</feature>
<sequence length="321" mass="35706">MEYKPVPTVKDAAPFDASQDAQVLRAAMKGFGTDEQEIIDVLVGRSNQQRQTIKAVYEAEFERDLVDDLKDELGGKFEDVIVGLMMPPVEYLCKQLHAAMAGIGTEEATLVEILCTKTNEEMAQIVAVYEERYQRPLAEQMCSETSGFFRRLLTLIVTGVRDGLDTPVDVGQAKEQAAQLYSAGEAKLGTDEEVFNRIMSHASFPQLRLVFEEYKVLSGQTIEQAIKHEMSDELHEAMMAIVECVQSPAAFFANRLYKAMNGAGTDDATLIRIIVSRSEIDLETIKQEFERIYNRTLHSAVVDAETSGDYKRALTALLGSA</sequence>